<protein>
    <recommendedName>
        <fullName evidence="3">Cyclotide mra2</fullName>
    </recommendedName>
</protein>
<sequence>GIPCAESCVYIPCLTSAGCSCKSKVCYRN</sequence>
<evidence type="ECO:0000255" key="1">
    <source>
        <dbReference type="PROSITE-ProRule" id="PRU00395"/>
    </source>
</evidence>
<evidence type="ECO:0000269" key="2">
    <source>
    </source>
</evidence>
<evidence type="ECO:0000303" key="3">
    <source>
    </source>
</evidence>
<evidence type="ECO:0000305" key="4"/>
<evidence type="ECO:0000305" key="5">
    <source>
    </source>
</evidence>
<organism evidence="3">
    <name type="scientific">Melicytus ramiflorus</name>
    <name type="common">Whitey wood</name>
    <dbReference type="NCBI Taxonomy" id="316498"/>
    <lineage>
        <taxon>Eukaryota</taxon>
        <taxon>Viridiplantae</taxon>
        <taxon>Streptophyta</taxon>
        <taxon>Embryophyta</taxon>
        <taxon>Tracheophyta</taxon>
        <taxon>Spermatophyta</taxon>
        <taxon>Magnoliopsida</taxon>
        <taxon>eudicotyledons</taxon>
        <taxon>Gunneridae</taxon>
        <taxon>Pentapetalae</taxon>
        <taxon>rosids</taxon>
        <taxon>fabids</taxon>
        <taxon>Malpighiales</taxon>
        <taxon>Violaceae</taxon>
        <taxon>Melicytus</taxon>
    </lineage>
</organism>
<feature type="peptide" id="PRO_0000441830" description="Cyclotide mra2" evidence="2">
    <location>
        <begin position="1"/>
        <end position="29"/>
    </location>
</feature>
<feature type="disulfide bond" evidence="1">
    <location>
        <begin position="4"/>
        <end position="19"/>
    </location>
</feature>
<feature type="disulfide bond" evidence="1">
    <location>
        <begin position="8"/>
        <end position="21"/>
    </location>
</feature>
<feature type="disulfide bond" evidence="1">
    <location>
        <begin position="13"/>
        <end position="26"/>
    </location>
</feature>
<proteinExistence type="evidence at protein level"/>
<accession>C0HL33</accession>
<keyword id="KW-0903">Direct protein sequencing</keyword>
<keyword id="KW-1015">Disulfide bond</keyword>
<keyword id="KW-0960">Knottin</keyword>
<keyword id="KW-0611">Plant defense</keyword>
<name>CYMR2_MELRA</name>
<reference evidence="4" key="1">
    <citation type="journal article" date="2009" name="Org. Biomol. Chem.">
        <title>Circular proteins from Melicytus (Violaceae) refine the conserved protein and gene architecture of cyclotides.</title>
        <authorList>
            <person name="Trabi M."/>
            <person name="Mylne J.S."/>
            <person name="Sando L."/>
            <person name="Craik D.J."/>
        </authorList>
    </citation>
    <scope>PROTEIN SEQUENCE</scope>
    <scope>MASS SPECTROMETRY</scope>
    <scope>PRESENCE OF DISULFIDE BONDS</scope>
    <source>
        <tissue evidence="3">Leaf</tissue>
    </source>
</reference>
<dbReference type="SMR" id="C0HL33"/>
<dbReference type="GO" id="GO:0006952">
    <property type="term" value="P:defense response"/>
    <property type="evidence" value="ECO:0007669"/>
    <property type="project" value="UniProtKB-KW"/>
</dbReference>
<dbReference type="InterPro" id="IPR005535">
    <property type="entry name" value="Cyclotide"/>
</dbReference>
<dbReference type="InterPro" id="IPR012323">
    <property type="entry name" value="Cyclotide_bracelet_CS"/>
</dbReference>
<dbReference type="InterPro" id="IPR036146">
    <property type="entry name" value="Cyclotide_sf"/>
</dbReference>
<dbReference type="Pfam" id="PF03784">
    <property type="entry name" value="Cyclotide"/>
    <property type="match status" value="1"/>
</dbReference>
<dbReference type="PIRSF" id="PIRSF037891">
    <property type="entry name" value="Cycloviolacin"/>
    <property type="match status" value="1"/>
</dbReference>
<dbReference type="SUPFAM" id="SSF57038">
    <property type="entry name" value="Cyclotides"/>
    <property type="match status" value="1"/>
</dbReference>
<dbReference type="PROSITE" id="PS51052">
    <property type="entry name" value="CYCLOTIDE"/>
    <property type="match status" value="1"/>
</dbReference>
<dbReference type="PROSITE" id="PS60008">
    <property type="entry name" value="CYCLOTIDE_BRACELET"/>
    <property type="match status" value="1"/>
</dbReference>
<comment type="function">
    <text evidence="1">Probably participates in a plant defense mechanism.</text>
</comment>
<comment type="domain">
    <text evidence="4">The presence of a 'disulfide through disulfide knot' structurally defines this protein as a knottin.</text>
</comment>
<comment type="PTM">
    <text evidence="1 2">This is a cyclic peptide.</text>
</comment>
<comment type="PTM">
    <text evidence="2">Contains 3 disulfide bonds.</text>
</comment>
<comment type="mass spectrometry"/>
<comment type="similarity">
    <text evidence="1">Belongs to the cyclotide family. Bracelet subfamily.</text>
</comment>
<comment type="caution">
    <text evidence="5">This peptide is cyclic. The start position was chosen by similarity to cyclotide mra4 for which the DNA sequence is known.</text>
</comment>